<sequence length="86" mass="9743">MKTLLLTLVVVTIVCLDLGYTLTCLICPEKYCNKVHTCLNGEKICFKKYDQRKLLGKGYIRGCADTCPKLQNRDVIFCCSTDKCNL</sequence>
<feature type="signal peptide" evidence="4">
    <location>
        <begin position="1"/>
        <end position="21"/>
    </location>
</feature>
<feature type="chain" id="PRO_0000035471" description="Probable weak neurotoxin NNAM3">
    <location>
        <begin position="22"/>
        <end position="86"/>
    </location>
</feature>
<feature type="disulfide bond" evidence="3">
    <location>
        <begin position="24"/>
        <end position="45"/>
    </location>
</feature>
<feature type="disulfide bond" evidence="3">
    <location>
        <begin position="27"/>
        <end position="32"/>
    </location>
</feature>
<feature type="disulfide bond" evidence="3">
    <location>
        <begin position="38"/>
        <end position="63"/>
    </location>
</feature>
<feature type="disulfide bond" evidence="3">
    <location>
        <begin position="67"/>
        <end position="78"/>
    </location>
</feature>
<feature type="disulfide bond" evidence="3">
    <location>
        <begin position="79"/>
        <end position="84"/>
    </location>
</feature>
<evidence type="ECO:0000250" key="1"/>
<evidence type="ECO:0000250" key="2">
    <source>
        <dbReference type="UniProtKB" id="O42255"/>
    </source>
</evidence>
<evidence type="ECO:0000250" key="3">
    <source>
        <dbReference type="UniProtKB" id="Q8AY51"/>
    </source>
</evidence>
<evidence type="ECO:0000255" key="4"/>
<evidence type="ECO:0000305" key="5"/>
<keyword id="KW-0008">Acetylcholine receptor inhibiting toxin</keyword>
<keyword id="KW-1015">Disulfide bond</keyword>
<keyword id="KW-0872">Ion channel impairing toxin</keyword>
<keyword id="KW-0528">Neurotoxin</keyword>
<keyword id="KW-0629">Postsynaptic neurotoxin</keyword>
<keyword id="KW-0964">Secreted</keyword>
<keyword id="KW-0732">Signal</keyword>
<keyword id="KW-0800">Toxin</keyword>
<accession>Q9YGI1</accession>
<dbReference type="EMBL" id="AJ223155">
    <property type="protein sequence ID" value="CAA11134.1"/>
    <property type="molecule type" value="mRNA"/>
</dbReference>
<dbReference type="SMR" id="Q9YGI1"/>
<dbReference type="GO" id="GO:0005576">
    <property type="term" value="C:extracellular region"/>
    <property type="evidence" value="ECO:0007669"/>
    <property type="project" value="UniProtKB-SubCell"/>
</dbReference>
<dbReference type="GO" id="GO:0030550">
    <property type="term" value="F:acetylcholine receptor inhibitor activity"/>
    <property type="evidence" value="ECO:0007669"/>
    <property type="project" value="UniProtKB-KW"/>
</dbReference>
<dbReference type="GO" id="GO:0099106">
    <property type="term" value="F:ion channel regulator activity"/>
    <property type="evidence" value="ECO:0007669"/>
    <property type="project" value="UniProtKB-KW"/>
</dbReference>
<dbReference type="GO" id="GO:0090729">
    <property type="term" value="F:toxin activity"/>
    <property type="evidence" value="ECO:0007669"/>
    <property type="project" value="UniProtKB-KW"/>
</dbReference>
<dbReference type="CDD" id="cd00206">
    <property type="entry name" value="TFP_snake_toxin"/>
    <property type="match status" value="1"/>
</dbReference>
<dbReference type="FunFam" id="2.10.60.10:FF:000024">
    <property type="entry name" value="Cytotoxin 1"/>
    <property type="match status" value="1"/>
</dbReference>
<dbReference type="Gene3D" id="2.10.60.10">
    <property type="entry name" value="CD59"/>
    <property type="match status" value="1"/>
</dbReference>
<dbReference type="InterPro" id="IPR003571">
    <property type="entry name" value="Snake_3FTx"/>
</dbReference>
<dbReference type="InterPro" id="IPR045860">
    <property type="entry name" value="Snake_toxin-like_sf"/>
</dbReference>
<dbReference type="InterPro" id="IPR018354">
    <property type="entry name" value="Snake_toxin_con_site"/>
</dbReference>
<dbReference type="InterPro" id="IPR054131">
    <property type="entry name" value="Toxin_cobra-type"/>
</dbReference>
<dbReference type="Pfam" id="PF21947">
    <property type="entry name" value="Toxin_cobra-type"/>
    <property type="match status" value="1"/>
</dbReference>
<dbReference type="SUPFAM" id="SSF57302">
    <property type="entry name" value="Snake toxin-like"/>
    <property type="match status" value="1"/>
</dbReference>
<dbReference type="PROSITE" id="PS00272">
    <property type="entry name" value="SNAKE_TOXIN"/>
    <property type="match status" value="1"/>
</dbReference>
<proteinExistence type="inferred from homology"/>
<organism>
    <name type="scientific">Naja atra</name>
    <name type="common">Chinese cobra</name>
    <dbReference type="NCBI Taxonomy" id="8656"/>
    <lineage>
        <taxon>Eukaryota</taxon>
        <taxon>Metazoa</taxon>
        <taxon>Chordata</taxon>
        <taxon>Craniata</taxon>
        <taxon>Vertebrata</taxon>
        <taxon>Euteleostomi</taxon>
        <taxon>Lepidosauria</taxon>
        <taxon>Squamata</taxon>
        <taxon>Bifurcata</taxon>
        <taxon>Unidentata</taxon>
        <taxon>Episquamata</taxon>
        <taxon>Toxicofera</taxon>
        <taxon>Serpentes</taxon>
        <taxon>Colubroidea</taxon>
        <taxon>Elapidae</taxon>
        <taxon>Elapinae</taxon>
        <taxon>Naja</taxon>
    </lineage>
</organism>
<comment type="function">
    <text evidence="2">Binds with low affinity to muscular (alpha-1-beta-1-delta-epsilon/CHRNA1-CHRNB1-CHRND-CHRNE) and very low affinity to neuronal (alpha-7/CHRNA7) nicotinic acetylcholine receptor (nAChR).</text>
</comment>
<comment type="subcellular location">
    <subcellularLocation>
        <location evidence="1">Secreted</location>
    </subcellularLocation>
</comment>
<comment type="tissue specificity">
    <text evidence="5">Expressed by the venom gland.</text>
</comment>
<comment type="similarity">
    <text evidence="5">Belongs to the three-finger toxin family. Ancestral subfamily. Orphan group II sub-subfamily.</text>
</comment>
<name>3NO23_NAJAT</name>
<protein>
    <recommendedName>
        <fullName>Probable weak neurotoxin NNAM3</fullName>
    </recommendedName>
</protein>
<reference key="1">
    <citation type="journal article" date="1998" name="Biochim. Biophys. Acta">
        <title>cDNA sequence analysis and expression of four long neurotoxin homologues from Naja naja atra.</title>
        <authorList>
            <person name="Qian Y.-C."/>
            <person name="Fan C.-Y."/>
            <person name="Gong Y."/>
            <person name="Yang S.-L."/>
        </authorList>
    </citation>
    <scope>NUCLEOTIDE SEQUENCE [MRNA]</scope>
    <source>
        <tissue>Venom gland</tissue>
    </source>
</reference>